<gene>
    <name evidence="1" type="primary">dapD</name>
    <name type="ordered locus">Ssed_3164</name>
</gene>
<comment type="catalytic activity">
    <reaction evidence="1">
        <text>(S)-2,3,4,5-tetrahydrodipicolinate + succinyl-CoA + H2O = (S)-2-succinylamino-6-oxoheptanedioate + CoA</text>
        <dbReference type="Rhea" id="RHEA:17325"/>
        <dbReference type="ChEBI" id="CHEBI:15377"/>
        <dbReference type="ChEBI" id="CHEBI:15685"/>
        <dbReference type="ChEBI" id="CHEBI:16845"/>
        <dbReference type="ChEBI" id="CHEBI:57287"/>
        <dbReference type="ChEBI" id="CHEBI:57292"/>
        <dbReference type="EC" id="2.3.1.117"/>
    </reaction>
</comment>
<comment type="pathway">
    <text evidence="1">Amino-acid biosynthesis; L-lysine biosynthesis via DAP pathway; LL-2,6-diaminopimelate from (S)-tetrahydrodipicolinate (succinylase route): step 1/3.</text>
</comment>
<comment type="subunit">
    <text evidence="1">Homotrimer.</text>
</comment>
<comment type="subcellular location">
    <subcellularLocation>
        <location evidence="1">Cytoplasm</location>
    </subcellularLocation>
</comment>
<comment type="similarity">
    <text evidence="1">Belongs to the transferase hexapeptide repeat family.</text>
</comment>
<organism>
    <name type="scientific">Shewanella sediminis (strain HAW-EB3)</name>
    <dbReference type="NCBI Taxonomy" id="425104"/>
    <lineage>
        <taxon>Bacteria</taxon>
        <taxon>Pseudomonadati</taxon>
        <taxon>Pseudomonadota</taxon>
        <taxon>Gammaproteobacteria</taxon>
        <taxon>Alteromonadales</taxon>
        <taxon>Shewanellaceae</taxon>
        <taxon>Shewanella</taxon>
    </lineage>
</organism>
<accession>A8FY45</accession>
<sequence>MEALRQRIEAAFEARAEITPNSVEPSVRADVEKAISMLDKGEARVAEKIDGQWHVHQWLKKAVLLSFRIFDNGVIDGGETKYFDKVPMKFADYDEARFKEEAIRVVPPATVRKGSFIGKNTVLMPSYVNLGAYVDEGTMVDTWATVGSCAQIGKNVHLSGGVGIGGVLEPLQAGPTIIEDNCFIGARSEVVEGVIVEEGSVISMGVYLGQSTRIYDRETGEVHYGRVPAGSVVVSGTLPSKCGTYNLYAAIIVKKVDAKTRGKVGINELLRIVD</sequence>
<reference key="1">
    <citation type="submission" date="2007-08" db="EMBL/GenBank/DDBJ databases">
        <title>Complete sequence of Shewanella sediminis HAW-EB3.</title>
        <authorList>
            <consortium name="US DOE Joint Genome Institute"/>
            <person name="Copeland A."/>
            <person name="Lucas S."/>
            <person name="Lapidus A."/>
            <person name="Barry K."/>
            <person name="Glavina del Rio T."/>
            <person name="Dalin E."/>
            <person name="Tice H."/>
            <person name="Pitluck S."/>
            <person name="Chertkov O."/>
            <person name="Brettin T."/>
            <person name="Bruce D."/>
            <person name="Detter J.C."/>
            <person name="Han C."/>
            <person name="Schmutz J."/>
            <person name="Larimer F."/>
            <person name="Land M."/>
            <person name="Hauser L."/>
            <person name="Kyrpides N."/>
            <person name="Kim E."/>
            <person name="Zhao J.-S."/>
            <person name="Richardson P."/>
        </authorList>
    </citation>
    <scope>NUCLEOTIDE SEQUENCE [LARGE SCALE GENOMIC DNA]</scope>
    <source>
        <strain>HAW-EB3</strain>
    </source>
</reference>
<feature type="chain" id="PRO_1000083760" description="2,3,4,5-tetrahydropyridine-2,6-dicarboxylate N-succinyltransferase">
    <location>
        <begin position="1"/>
        <end position="274"/>
    </location>
</feature>
<feature type="binding site" evidence="1">
    <location>
        <position position="104"/>
    </location>
    <ligand>
        <name>substrate</name>
    </ligand>
</feature>
<feature type="binding site" evidence="1">
    <location>
        <position position="141"/>
    </location>
    <ligand>
        <name>substrate</name>
    </ligand>
</feature>
<proteinExistence type="inferred from homology"/>
<dbReference type="EC" id="2.3.1.117" evidence="1"/>
<dbReference type="EMBL" id="CP000821">
    <property type="protein sequence ID" value="ABV37768.1"/>
    <property type="molecule type" value="Genomic_DNA"/>
</dbReference>
<dbReference type="RefSeq" id="WP_012143498.1">
    <property type="nucleotide sequence ID" value="NC_009831.1"/>
</dbReference>
<dbReference type="SMR" id="A8FY45"/>
<dbReference type="STRING" id="425104.Ssed_3164"/>
<dbReference type="KEGG" id="sse:Ssed_3164"/>
<dbReference type="eggNOG" id="COG2171">
    <property type="taxonomic scope" value="Bacteria"/>
</dbReference>
<dbReference type="HOGENOM" id="CLU_050859_0_1_6"/>
<dbReference type="OrthoDB" id="9775362at2"/>
<dbReference type="UniPathway" id="UPA00034">
    <property type="reaction ID" value="UER00019"/>
</dbReference>
<dbReference type="Proteomes" id="UP000002015">
    <property type="component" value="Chromosome"/>
</dbReference>
<dbReference type="GO" id="GO:0005737">
    <property type="term" value="C:cytoplasm"/>
    <property type="evidence" value="ECO:0007669"/>
    <property type="project" value="UniProtKB-SubCell"/>
</dbReference>
<dbReference type="GO" id="GO:0008666">
    <property type="term" value="F:2,3,4,5-tetrahydropyridine-2,6-dicarboxylate N-succinyltransferase activity"/>
    <property type="evidence" value="ECO:0007669"/>
    <property type="project" value="UniProtKB-UniRule"/>
</dbReference>
<dbReference type="GO" id="GO:0016779">
    <property type="term" value="F:nucleotidyltransferase activity"/>
    <property type="evidence" value="ECO:0007669"/>
    <property type="project" value="TreeGrafter"/>
</dbReference>
<dbReference type="GO" id="GO:0019877">
    <property type="term" value="P:diaminopimelate biosynthetic process"/>
    <property type="evidence" value="ECO:0007669"/>
    <property type="project" value="UniProtKB-UniRule"/>
</dbReference>
<dbReference type="GO" id="GO:0009089">
    <property type="term" value="P:lysine biosynthetic process via diaminopimelate"/>
    <property type="evidence" value="ECO:0007669"/>
    <property type="project" value="UniProtKB-UniRule"/>
</dbReference>
<dbReference type="CDD" id="cd03350">
    <property type="entry name" value="LbH_THP_succinylT"/>
    <property type="match status" value="1"/>
</dbReference>
<dbReference type="Gene3D" id="2.160.10.10">
    <property type="entry name" value="Hexapeptide repeat proteins"/>
    <property type="match status" value="1"/>
</dbReference>
<dbReference type="Gene3D" id="1.10.166.10">
    <property type="entry name" value="Tetrahydrodipicolinate-N-succinyltransferase, N-terminal domain"/>
    <property type="match status" value="1"/>
</dbReference>
<dbReference type="HAMAP" id="MF_00811">
    <property type="entry name" value="DapD"/>
    <property type="match status" value="1"/>
</dbReference>
<dbReference type="InterPro" id="IPR005664">
    <property type="entry name" value="DapD_Trfase_Hexpep_rpt_fam"/>
</dbReference>
<dbReference type="InterPro" id="IPR001451">
    <property type="entry name" value="Hexapep"/>
</dbReference>
<dbReference type="InterPro" id="IPR018357">
    <property type="entry name" value="Hexapep_transf_CS"/>
</dbReference>
<dbReference type="InterPro" id="IPR023180">
    <property type="entry name" value="THP_succinylTrfase_dom1"/>
</dbReference>
<dbReference type="InterPro" id="IPR037133">
    <property type="entry name" value="THP_succinylTrfase_N_sf"/>
</dbReference>
<dbReference type="InterPro" id="IPR011004">
    <property type="entry name" value="Trimer_LpxA-like_sf"/>
</dbReference>
<dbReference type="NCBIfam" id="TIGR00965">
    <property type="entry name" value="dapD"/>
    <property type="match status" value="1"/>
</dbReference>
<dbReference type="NCBIfam" id="NF008808">
    <property type="entry name" value="PRK11830.1"/>
    <property type="match status" value="1"/>
</dbReference>
<dbReference type="PANTHER" id="PTHR19136:SF52">
    <property type="entry name" value="2,3,4,5-TETRAHYDROPYRIDINE-2,6-DICARBOXYLATE N-SUCCINYLTRANSFERASE"/>
    <property type="match status" value="1"/>
</dbReference>
<dbReference type="PANTHER" id="PTHR19136">
    <property type="entry name" value="MOLYBDENUM COFACTOR GUANYLYLTRANSFERASE"/>
    <property type="match status" value="1"/>
</dbReference>
<dbReference type="Pfam" id="PF14602">
    <property type="entry name" value="Hexapep_2"/>
    <property type="match status" value="1"/>
</dbReference>
<dbReference type="Pfam" id="PF14805">
    <property type="entry name" value="THDPS_N_2"/>
    <property type="match status" value="1"/>
</dbReference>
<dbReference type="SUPFAM" id="SSF51161">
    <property type="entry name" value="Trimeric LpxA-like enzymes"/>
    <property type="match status" value="1"/>
</dbReference>
<dbReference type="PROSITE" id="PS00101">
    <property type="entry name" value="HEXAPEP_TRANSFERASES"/>
    <property type="match status" value="1"/>
</dbReference>
<evidence type="ECO:0000255" key="1">
    <source>
        <dbReference type="HAMAP-Rule" id="MF_00811"/>
    </source>
</evidence>
<protein>
    <recommendedName>
        <fullName evidence="1">2,3,4,5-tetrahydropyridine-2,6-dicarboxylate N-succinyltransferase</fullName>
        <ecNumber evidence="1">2.3.1.117</ecNumber>
    </recommendedName>
    <alternativeName>
        <fullName evidence="1">Tetrahydrodipicolinate N-succinyltransferase</fullName>
        <shortName evidence="1">THDP succinyltransferase</shortName>
        <shortName evidence="1">THP succinyltransferase</shortName>
        <shortName evidence="1">Tetrahydropicolinate succinylase</shortName>
    </alternativeName>
</protein>
<name>DAPD_SHESH</name>
<keyword id="KW-0012">Acyltransferase</keyword>
<keyword id="KW-0028">Amino-acid biosynthesis</keyword>
<keyword id="KW-0963">Cytoplasm</keyword>
<keyword id="KW-0220">Diaminopimelate biosynthesis</keyword>
<keyword id="KW-0457">Lysine biosynthesis</keyword>
<keyword id="KW-1185">Reference proteome</keyword>
<keyword id="KW-0677">Repeat</keyword>
<keyword id="KW-0808">Transferase</keyword>